<name>MRAY_PECAS</name>
<gene>
    <name evidence="1" type="primary">mraY</name>
    <name type="ordered locus">ECA3818</name>
</gene>
<proteinExistence type="inferred from homology"/>
<dbReference type="EC" id="2.7.8.13" evidence="1"/>
<dbReference type="EMBL" id="BX950851">
    <property type="protein sequence ID" value="CAG76717.1"/>
    <property type="molecule type" value="Genomic_DNA"/>
</dbReference>
<dbReference type="RefSeq" id="WP_010298023.1">
    <property type="nucleotide sequence ID" value="NC_004547.2"/>
</dbReference>
<dbReference type="SMR" id="Q6D0I0"/>
<dbReference type="STRING" id="218491.ECA3818"/>
<dbReference type="GeneID" id="93391763"/>
<dbReference type="KEGG" id="eca:ECA3818"/>
<dbReference type="eggNOG" id="COG0472">
    <property type="taxonomic scope" value="Bacteria"/>
</dbReference>
<dbReference type="HOGENOM" id="CLU_023982_0_0_6"/>
<dbReference type="OrthoDB" id="9805475at2"/>
<dbReference type="UniPathway" id="UPA00219"/>
<dbReference type="Proteomes" id="UP000007966">
    <property type="component" value="Chromosome"/>
</dbReference>
<dbReference type="GO" id="GO:0005886">
    <property type="term" value="C:plasma membrane"/>
    <property type="evidence" value="ECO:0007669"/>
    <property type="project" value="UniProtKB-SubCell"/>
</dbReference>
<dbReference type="GO" id="GO:0046872">
    <property type="term" value="F:metal ion binding"/>
    <property type="evidence" value="ECO:0007669"/>
    <property type="project" value="UniProtKB-KW"/>
</dbReference>
<dbReference type="GO" id="GO:0008963">
    <property type="term" value="F:phospho-N-acetylmuramoyl-pentapeptide-transferase activity"/>
    <property type="evidence" value="ECO:0007669"/>
    <property type="project" value="UniProtKB-UniRule"/>
</dbReference>
<dbReference type="GO" id="GO:0051992">
    <property type="term" value="F:UDP-N-acetylmuramoyl-L-alanyl-D-glutamyl-meso-2,6-diaminopimelyl-D-alanyl-D-alanine:undecaprenyl-phosphate transferase activity"/>
    <property type="evidence" value="ECO:0007669"/>
    <property type="project" value="RHEA"/>
</dbReference>
<dbReference type="GO" id="GO:0051301">
    <property type="term" value="P:cell division"/>
    <property type="evidence" value="ECO:0007669"/>
    <property type="project" value="UniProtKB-KW"/>
</dbReference>
<dbReference type="GO" id="GO:0071555">
    <property type="term" value="P:cell wall organization"/>
    <property type="evidence" value="ECO:0007669"/>
    <property type="project" value="UniProtKB-KW"/>
</dbReference>
<dbReference type="GO" id="GO:0009252">
    <property type="term" value="P:peptidoglycan biosynthetic process"/>
    <property type="evidence" value="ECO:0007669"/>
    <property type="project" value="UniProtKB-UniRule"/>
</dbReference>
<dbReference type="GO" id="GO:0008360">
    <property type="term" value="P:regulation of cell shape"/>
    <property type="evidence" value="ECO:0007669"/>
    <property type="project" value="UniProtKB-KW"/>
</dbReference>
<dbReference type="CDD" id="cd06852">
    <property type="entry name" value="GT_MraY"/>
    <property type="match status" value="1"/>
</dbReference>
<dbReference type="HAMAP" id="MF_00038">
    <property type="entry name" value="MraY"/>
    <property type="match status" value="1"/>
</dbReference>
<dbReference type="InterPro" id="IPR000715">
    <property type="entry name" value="Glycosyl_transferase_4"/>
</dbReference>
<dbReference type="InterPro" id="IPR003524">
    <property type="entry name" value="PNAcMuramoyl-5peptid_Trfase"/>
</dbReference>
<dbReference type="InterPro" id="IPR018480">
    <property type="entry name" value="PNAcMuramoyl-5peptid_Trfase_CS"/>
</dbReference>
<dbReference type="NCBIfam" id="TIGR00445">
    <property type="entry name" value="mraY"/>
    <property type="match status" value="1"/>
</dbReference>
<dbReference type="PANTHER" id="PTHR22926">
    <property type="entry name" value="PHOSPHO-N-ACETYLMURAMOYL-PENTAPEPTIDE-TRANSFERASE"/>
    <property type="match status" value="1"/>
</dbReference>
<dbReference type="PANTHER" id="PTHR22926:SF5">
    <property type="entry name" value="PHOSPHO-N-ACETYLMURAMOYL-PENTAPEPTIDE-TRANSFERASE HOMOLOG"/>
    <property type="match status" value="1"/>
</dbReference>
<dbReference type="Pfam" id="PF00953">
    <property type="entry name" value="Glycos_transf_4"/>
    <property type="match status" value="1"/>
</dbReference>
<dbReference type="Pfam" id="PF10555">
    <property type="entry name" value="MraY_sig1"/>
    <property type="match status" value="1"/>
</dbReference>
<dbReference type="PROSITE" id="PS01347">
    <property type="entry name" value="MRAY_1"/>
    <property type="match status" value="1"/>
</dbReference>
<dbReference type="PROSITE" id="PS01348">
    <property type="entry name" value="MRAY_2"/>
    <property type="match status" value="1"/>
</dbReference>
<keyword id="KW-0131">Cell cycle</keyword>
<keyword id="KW-0132">Cell division</keyword>
<keyword id="KW-0997">Cell inner membrane</keyword>
<keyword id="KW-1003">Cell membrane</keyword>
<keyword id="KW-0133">Cell shape</keyword>
<keyword id="KW-0961">Cell wall biogenesis/degradation</keyword>
<keyword id="KW-0460">Magnesium</keyword>
<keyword id="KW-0472">Membrane</keyword>
<keyword id="KW-0479">Metal-binding</keyword>
<keyword id="KW-0573">Peptidoglycan synthesis</keyword>
<keyword id="KW-1185">Reference proteome</keyword>
<keyword id="KW-0808">Transferase</keyword>
<keyword id="KW-0812">Transmembrane</keyword>
<keyword id="KW-1133">Transmembrane helix</keyword>
<organism>
    <name type="scientific">Pectobacterium atrosepticum (strain SCRI 1043 / ATCC BAA-672)</name>
    <name type="common">Erwinia carotovora subsp. atroseptica</name>
    <dbReference type="NCBI Taxonomy" id="218491"/>
    <lineage>
        <taxon>Bacteria</taxon>
        <taxon>Pseudomonadati</taxon>
        <taxon>Pseudomonadota</taxon>
        <taxon>Gammaproteobacteria</taxon>
        <taxon>Enterobacterales</taxon>
        <taxon>Pectobacteriaceae</taxon>
        <taxon>Pectobacterium</taxon>
    </lineage>
</organism>
<comment type="function">
    <text evidence="1">Catalyzes the initial step of the lipid cycle reactions in the biosynthesis of the cell wall peptidoglycan: transfers peptidoglycan precursor phospho-MurNAc-pentapeptide from UDP-MurNAc-pentapeptide onto the lipid carrier undecaprenyl phosphate, yielding undecaprenyl-pyrophosphoryl-MurNAc-pentapeptide, known as lipid I.</text>
</comment>
<comment type="catalytic activity">
    <reaction evidence="1">
        <text>UDP-N-acetyl-alpha-D-muramoyl-L-alanyl-gamma-D-glutamyl-meso-2,6-diaminopimeloyl-D-alanyl-D-alanine + di-trans,octa-cis-undecaprenyl phosphate = di-trans,octa-cis-undecaprenyl diphospho-N-acetyl-alpha-D-muramoyl-L-alanyl-D-glutamyl-meso-2,6-diaminopimeloyl-D-alanyl-D-alanine + UMP</text>
        <dbReference type="Rhea" id="RHEA:28386"/>
        <dbReference type="ChEBI" id="CHEBI:57865"/>
        <dbReference type="ChEBI" id="CHEBI:60392"/>
        <dbReference type="ChEBI" id="CHEBI:61386"/>
        <dbReference type="ChEBI" id="CHEBI:61387"/>
        <dbReference type="EC" id="2.7.8.13"/>
    </reaction>
</comment>
<comment type="cofactor">
    <cofactor evidence="1">
        <name>Mg(2+)</name>
        <dbReference type="ChEBI" id="CHEBI:18420"/>
    </cofactor>
</comment>
<comment type="pathway">
    <text evidence="1">Cell wall biogenesis; peptidoglycan biosynthesis.</text>
</comment>
<comment type="subcellular location">
    <subcellularLocation>
        <location evidence="1">Cell inner membrane</location>
        <topology evidence="1">Multi-pass membrane protein</topology>
    </subcellularLocation>
</comment>
<comment type="similarity">
    <text evidence="1">Belongs to the glycosyltransferase 4 family. MraY subfamily.</text>
</comment>
<sequence>MLVWLAEHLAKLYTGFNVFSYLTFRAIVSLLTALVISLWMGPHMIAWLQRLQIGQVVRNEGPESHFSKRGTPTMGGVMILVAIIVSVLMWANLSNPYVWCVLLVLAGYGAVGFVDDYRKVVRKDTKGLIARWKYFWQSVIALVVAFTMYSIGKDTPATQLVVPFFKDVMPQLGLLYVALAYFVIVGTSNAVNLTDGLDGLAIMPTVFVAAGFALVAWATGNMNFAGYLHIPYIRHASELVIVCTAIVGAGLGFLWFNTYPAQVFMGDVGSLALGGALGTIAVLLRQEFLLVIMGGVFVVETLSVILQVGSFKLRGQRIFRMAPIHHHYELKGWPEPRVIVRFWIISLMLVLIGLATLKVR</sequence>
<evidence type="ECO:0000255" key="1">
    <source>
        <dbReference type="HAMAP-Rule" id="MF_00038"/>
    </source>
</evidence>
<feature type="chain" id="PRO_0000108825" description="Phospho-N-acetylmuramoyl-pentapeptide-transferase">
    <location>
        <begin position="1"/>
        <end position="360"/>
    </location>
</feature>
<feature type="transmembrane region" description="Helical" evidence="1">
    <location>
        <begin position="27"/>
        <end position="47"/>
    </location>
</feature>
<feature type="transmembrane region" description="Helical" evidence="1">
    <location>
        <begin position="73"/>
        <end position="93"/>
    </location>
</feature>
<feature type="transmembrane region" description="Helical" evidence="1">
    <location>
        <begin position="94"/>
        <end position="114"/>
    </location>
</feature>
<feature type="transmembrane region" description="Helical" evidence="1">
    <location>
        <begin position="132"/>
        <end position="152"/>
    </location>
</feature>
<feature type="transmembrane region" description="Helical" evidence="1">
    <location>
        <begin position="168"/>
        <end position="188"/>
    </location>
</feature>
<feature type="transmembrane region" description="Helical" evidence="1">
    <location>
        <begin position="199"/>
        <end position="219"/>
    </location>
</feature>
<feature type="transmembrane region" description="Helical" evidence="1">
    <location>
        <begin position="236"/>
        <end position="256"/>
    </location>
</feature>
<feature type="transmembrane region" description="Helical" evidence="1">
    <location>
        <begin position="263"/>
        <end position="283"/>
    </location>
</feature>
<feature type="transmembrane region" description="Helical" evidence="1">
    <location>
        <begin position="288"/>
        <end position="308"/>
    </location>
</feature>
<feature type="transmembrane region" description="Helical" evidence="1">
    <location>
        <begin position="338"/>
        <end position="358"/>
    </location>
</feature>
<reference key="1">
    <citation type="journal article" date="2004" name="Proc. Natl. Acad. Sci. U.S.A.">
        <title>Genome sequence of the enterobacterial phytopathogen Erwinia carotovora subsp. atroseptica and characterization of virulence factors.</title>
        <authorList>
            <person name="Bell K.S."/>
            <person name="Sebaihia M."/>
            <person name="Pritchard L."/>
            <person name="Holden M.T.G."/>
            <person name="Hyman L.J."/>
            <person name="Holeva M.C."/>
            <person name="Thomson N.R."/>
            <person name="Bentley S.D."/>
            <person name="Churcher L.J.C."/>
            <person name="Mungall K."/>
            <person name="Atkin R."/>
            <person name="Bason N."/>
            <person name="Brooks K."/>
            <person name="Chillingworth T."/>
            <person name="Clark K."/>
            <person name="Doggett J."/>
            <person name="Fraser A."/>
            <person name="Hance Z."/>
            <person name="Hauser H."/>
            <person name="Jagels K."/>
            <person name="Moule S."/>
            <person name="Norbertczak H."/>
            <person name="Ormond D."/>
            <person name="Price C."/>
            <person name="Quail M.A."/>
            <person name="Sanders M."/>
            <person name="Walker D."/>
            <person name="Whitehead S."/>
            <person name="Salmond G.P.C."/>
            <person name="Birch P.R.J."/>
            <person name="Parkhill J."/>
            <person name="Toth I.K."/>
        </authorList>
    </citation>
    <scope>NUCLEOTIDE SEQUENCE [LARGE SCALE GENOMIC DNA]</scope>
    <source>
        <strain>SCRI 1043 / ATCC BAA-672</strain>
    </source>
</reference>
<accession>Q6D0I0</accession>
<protein>
    <recommendedName>
        <fullName evidence="1">Phospho-N-acetylmuramoyl-pentapeptide-transferase</fullName>
        <ecNumber evidence="1">2.7.8.13</ecNumber>
    </recommendedName>
    <alternativeName>
        <fullName evidence="1">UDP-MurNAc-pentapeptide phosphotransferase</fullName>
    </alternativeName>
</protein>